<protein>
    <recommendedName>
        <fullName>Stress-induced-phosphoprotein 1</fullName>
        <shortName>STI1</shortName>
    </recommendedName>
    <alternativeName>
        <fullName>Hsc70/Hsp90-organizing protein</fullName>
        <shortName>Hop</shortName>
    </alternativeName>
</protein>
<evidence type="ECO:0000250" key="1"/>
<evidence type="ECO:0000250" key="2">
    <source>
        <dbReference type="UniProtKB" id="O35814"/>
    </source>
</evidence>
<evidence type="ECO:0000250" key="3">
    <source>
        <dbReference type="UniProtKB" id="P31948"/>
    </source>
</evidence>
<evidence type="ECO:0000250" key="4">
    <source>
        <dbReference type="UniProtKB" id="Q60864"/>
    </source>
</evidence>
<evidence type="ECO:0000250" key="5">
    <source>
        <dbReference type="UniProtKB" id="Q7ZWU1"/>
    </source>
</evidence>
<evidence type="ECO:0000255" key="6"/>
<evidence type="ECO:0000256" key="7">
    <source>
        <dbReference type="SAM" id="MobiDB-lite"/>
    </source>
</evidence>
<comment type="function">
    <text evidence="2 3">Acts as a co-chaperone for HSP90AA1. Mediates the association of the molecular chaperones HSPA8/HSC70 and HSP90.</text>
</comment>
<comment type="subunit">
    <text evidence="2 3 4">Probably forms a complex composed of chaperones HSP90 and HSP70, co-chaperones STIP1/HOP, CDC37, PPP5C, PTGES3/p23, TSC1 and client protein TSC2. Forms a complex with HSPA8/HSC70, HSPCA/HSP-86 and HSPCB/HSP-84. Interacts with PACRG. Interacts with EEF1AKMT3 (By similarity). Interacts with HSP90/HSP90AA1; the interaction dissociates the PPP5C:HSP90AA1 interaction. Interacts with FLCN, FNIP1 and FNIP2. Interacts with HSPA8/HSC70. Interacts with HSP90AB1; upon SMYD2-dependent HSP90AB1 methylation.</text>
</comment>
<comment type="subcellular location">
    <subcellularLocation>
        <location evidence="4">Cytoplasm</location>
    </subcellularLocation>
    <subcellularLocation>
        <location evidence="4">Nucleus</location>
    </subcellularLocation>
    <subcellularLocation>
        <location evidence="5">Dynein axonemal particle</location>
    </subcellularLocation>
</comment>
<comment type="domain">
    <text evidence="1">The TPR 1 repeat interacts with the C-terminal of HSC70. The TPR 4, 5 and 6 repeats (also called TPR2A domain) and TPR 7, 8 and 9 repeats (also called TPR2B domain) interact with HSP90 (By similarity).</text>
</comment>
<dbReference type="EMBL" id="AB168414">
    <property type="protein sequence ID" value="BAE00535.1"/>
    <property type="molecule type" value="mRNA"/>
</dbReference>
<dbReference type="SMR" id="Q4R8N7"/>
<dbReference type="STRING" id="9541.ENSMFAP00000000268"/>
<dbReference type="eggNOG" id="KOG0548">
    <property type="taxonomic scope" value="Eukaryota"/>
</dbReference>
<dbReference type="Proteomes" id="UP000233100">
    <property type="component" value="Unplaced"/>
</dbReference>
<dbReference type="GO" id="GO:0120293">
    <property type="term" value="C:dynein axonemal particle"/>
    <property type="evidence" value="ECO:0000250"/>
    <property type="project" value="UniProtKB"/>
</dbReference>
<dbReference type="GO" id="GO:0005634">
    <property type="term" value="C:nucleus"/>
    <property type="evidence" value="ECO:0007669"/>
    <property type="project" value="UniProtKB-SubCell"/>
</dbReference>
<dbReference type="GO" id="GO:0051879">
    <property type="term" value="F:Hsp90 protein binding"/>
    <property type="evidence" value="ECO:0007669"/>
    <property type="project" value="TreeGrafter"/>
</dbReference>
<dbReference type="FunFam" id="1.10.260.100:FF:000004">
    <property type="entry name" value="Putative stress-induced-phosphoprotein 1"/>
    <property type="match status" value="1"/>
</dbReference>
<dbReference type="FunFam" id="1.25.40.10:FF:000010">
    <property type="entry name" value="Stress-induced phosphoprotein 1"/>
    <property type="match status" value="1"/>
</dbReference>
<dbReference type="FunFam" id="1.25.40.10:FF:000020">
    <property type="entry name" value="Stress-induced phosphoprotein 1"/>
    <property type="match status" value="1"/>
</dbReference>
<dbReference type="FunFam" id="1.10.260.100:FF:000002">
    <property type="entry name" value="Stress-induced-phosphoprotein 1 (Hsp70/Hsp90-organizing)"/>
    <property type="match status" value="1"/>
</dbReference>
<dbReference type="FunFam" id="1.25.40.10:FF:000027">
    <property type="entry name" value="stress-induced-phosphoprotein 1 isoform X1"/>
    <property type="match status" value="1"/>
</dbReference>
<dbReference type="Gene3D" id="1.10.260.100">
    <property type="match status" value="2"/>
</dbReference>
<dbReference type="Gene3D" id="1.25.40.10">
    <property type="entry name" value="Tetratricopeptide repeat domain"/>
    <property type="match status" value="3"/>
</dbReference>
<dbReference type="InterPro" id="IPR041243">
    <property type="entry name" value="STI1/HOP_DP"/>
</dbReference>
<dbReference type="InterPro" id="IPR006636">
    <property type="entry name" value="STI1_HS-bd"/>
</dbReference>
<dbReference type="InterPro" id="IPR011990">
    <property type="entry name" value="TPR-like_helical_dom_sf"/>
</dbReference>
<dbReference type="InterPro" id="IPR013105">
    <property type="entry name" value="TPR_2"/>
</dbReference>
<dbReference type="InterPro" id="IPR019734">
    <property type="entry name" value="TPR_rpt"/>
</dbReference>
<dbReference type="PANTHER" id="PTHR22904:SF523">
    <property type="entry name" value="STRESS-INDUCED-PHOSPHOPROTEIN 1"/>
    <property type="match status" value="1"/>
</dbReference>
<dbReference type="PANTHER" id="PTHR22904">
    <property type="entry name" value="TPR REPEAT CONTAINING PROTEIN"/>
    <property type="match status" value="1"/>
</dbReference>
<dbReference type="Pfam" id="PF17830">
    <property type="entry name" value="STI1-HOP_DP"/>
    <property type="match status" value="2"/>
</dbReference>
<dbReference type="Pfam" id="PF13414">
    <property type="entry name" value="TPR_11"/>
    <property type="match status" value="2"/>
</dbReference>
<dbReference type="Pfam" id="PF13424">
    <property type="entry name" value="TPR_12"/>
    <property type="match status" value="1"/>
</dbReference>
<dbReference type="Pfam" id="PF07719">
    <property type="entry name" value="TPR_2"/>
    <property type="match status" value="1"/>
</dbReference>
<dbReference type="Pfam" id="PF13181">
    <property type="entry name" value="TPR_8"/>
    <property type="match status" value="1"/>
</dbReference>
<dbReference type="SMART" id="SM00727">
    <property type="entry name" value="STI1"/>
    <property type="match status" value="2"/>
</dbReference>
<dbReference type="SMART" id="SM00028">
    <property type="entry name" value="TPR"/>
    <property type="match status" value="9"/>
</dbReference>
<dbReference type="SUPFAM" id="SSF48452">
    <property type="entry name" value="TPR-like"/>
    <property type="match status" value="3"/>
</dbReference>
<dbReference type="PROSITE" id="PS50005">
    <property type="entry name" value="TPR"/>
    <property type="match status" value="9"/>
</dbReference>
<dbReference type="PROSITE" id="PS50293">
    <property type="entry name" value="TPR_REGION"/>
    <property type="match status" value="2"/>
</dbReference>
<accession>Q4R8N7</accession>
<feature type="chain" id="PRO_0000328060" description="Stress-induced-phosphoprotein 1">
    <location>
        <begin position="1"/>
        <end position="543"/>
    </location>
</feature>
<feature type="repeat" description="TPR 1">
    <location>
        <begin position="4"/>
        <end position="37"/>
    </location>
</feature>
<feature type="repeat" description="TPR 2">
    <location>
        <begin position="39"/>
        <end position="71"/>
    </location>
</feature>
<feature type="repeat" description="TPR 3">
    <location>
        <begin position="73"/>
        <end position="105"/>
    </location>
</feature>
<feature type="domain" description="STI1 1">
    <location>
        <begin position="130"/>
        <end position="169"/>
    </location>
</feature>
<feature type="repeat" description="TPR 4">
    <location>
        <begin position="225"/>
        <end position="258"/>
    </location>
</feature>
<feature type="repeat" description="TPR 5">
    <location>
        <begin position="260"/>
        <end position="292"/>
    </location>
</feature>
<feature type="repeat" description="TPR 6">
    <location>
        <begin position="300"/>
        <end position="333"/>
    </location>
</feature>
<feature type="repeat" description="TPR 7">
    <location>
        <begin position="360"/>
        <end position="393"/>
    </location>
</feature>
<feature type="repeat" description="TPR 8">
    <location>
        <begin position="395"/>
        <end position="427"/>
    </location>
</feature>
<feature type="repeat" description="TPR 9">
    <location>
        <begin position="428"/>
        <end position="461"/>
    </location>
</feature>
<feature type="domain" description="STI1 2">
    <location>
        <begin position="492"/>
        <end position="531"/>
    </location>
</feature>
<feature type="region of interest" description="Disordered" evidence="7">
    <location>
        <begin position="191"/>
        <end position="233"/>
    </location>
</feature>
<feature type="short sequence motif" description="Bipartite nuclear localization signal" evidence="6">
    <location>
        <begin position="222"/>
        <end position="239"/>
    </location>
</feature>
<feature type="compositionally biased region" description="Basic and acidic residues" evidence="7">
    <location>
        <begin position="205"/>
        <end position="233"/>
    </location>
</feature>
<feature type="modified residue" description="N-acetylmethionine" evidence="3">
    <location>
        <position position="1"/>
    </location>
</feature>
<feature type="modified residue" description="N6-acetyllysine" evidence="3">
    <location>
        <position position="8"/>
    </location>
</feature>
<feature type="modified residue" description="Phosphoserine" evidence="3">
    <location>
        <position position="16"/>
    </location>
</feature>
<feature type="modified residue" description="Phosphothreonine" evidence="3">
    <location>
        <position position="198"/>
    </location>
</feature>
<feature type="modified residue" description="N6-acetyllysine" evidence="3">
    <location>
        <position position="301"/>
    </location>
</feature>
<feature type="modified residue" description="N6-acetyllysine" evidence="3">
    <location>
        <position position="312"/>
    </location>
</feature>
<feature type="modified residue" description="N6-acetyllysine" evidence="3">
    <location>
        <position position="325"/>
    </location>
</feature>
<feature type="modified residue" description="Phosphothreonine" evidence="3">
    <location>
        <position position="332"/>
    </location>
</feature>
<feature type="modified residue" description="N6-acetyllysine" evidence="3">
    <location>
        <position position="344"/>
    </location>
</feature>
<feature type="modified residue" description="Phosphotyrosine" evidence="3">
    <location>
        <position position="354"/>
    </location>
</feature>
<feature type="modified residue" description="N6-acetyllysine" evidence="3">
    <location>
        <position position="446"/>
    </location>
</feature>
<feature type="modified residue" description="Phosphoserine" evidence="3">
    <location>
        <position position="481"/>
    </location>
</feature>
<feature type="cross-link" description="Glycyl lysine isopeptide (Lys-Gly) (interchain with G-Cter in SUMO1); alternate" evidence="3">
    <location>
        <position position="123"/>
    </location>
</feature>
<feature type="cross-link" description="Glycyl lysine isopeptide (Lys-Gly) (interchain with G-Cter in SUMO2); alternate" evidence="3">
    <location>
        <position position="123"/>
    </location>
</feature>
<feature type="cross-link" description="Glycyl lysine isopeptide (Lys-Gly) (interchain with G-Cter in SUMO1); alternate" evidence="3">
    <location>
        <position position="210"/>
    </location>
</feature>
<feature type="cross-link" description="Glycyl lysine isopeptide (Lys-Gly) (interchain with G-Cter in SUMO2); alternate" evidence="3">
    <location>
        <position position="210"/>
    </location>
</feature>
<organism>
    <name type="scientific">Macaca fascicularis</name>
    <name type="common">Crab-eating macaque</name>
    <name type="synonym">Cynomolgus monkey</name>
    <dbReference type="NCBI Taxonomy" id="9541"/>
    <lineage>
        <taxon>Eukaryota</taxon>
        <taxon>Metazoa</taxon>
        <taxon>Chordata</taxon>
        <taxon>Craniata</taxon>
        <taxon>Vertebrata</taxon>
        <taxon>Euteleostomi</taxon>
        <taxon>Mammalia</taxon>
        <taxon>Eutheria</taxon>
        <taxon>Euarchontoglires</taxon>
        <taxon>Primates</taxon>
        <taxon>Haplorrhini</taxon>
        <taxon>Catarrhini</taxon>
        <taxon>Cercopithecidae</taxon>
        <taxon>Cercopithecinae</taxon>
        <taxon>Macaca</taxon>
    </lineage>
</organism>
<proteinExistence type="evidence at transcript level"/>
<keyword id="KW-0007">Acetylation</keyword>
<keyword id="KW-0963">Cytoplasm</keyword>
<keyword id="KW-1017">Isopeptide bond</keyword>
<keyword id="KW-0539">Nucleus</keyword>
<keyword id="KW-0597">Phosphoprotein</keyword>
<keyword id="KW-1185">Reference proteome</keyword>
<keyword id="KW-0677">Repeat</keyword>
<keyword id="KW-0802">TPR repeat</keyword>
<keyword id="KW-0832">Ubl conjugation</keyword>
<gene>
    <name type="primary">STIP1</name>
    <name type="ORF">QtsA-11959</name>
</gene>
<name>STIP1_MACFA</name>
<sequence>MEQVNELKEKGNKALSAGNIDDALQCYSEAIKLDPHNHVLYSNRSAAYAKKGDYQKAYEDGCKTVELKPDWGKGYSRKAAALEFLNRFEEAKRTYEEGLKHEANNPQLKEGLQNMEARLAERKFMNPFNMPNLYQKLESDPRTRTLLSDPTYRELIEQLRNKPSDLGTKLQDPRIMTTLSVLLGVDLGSMDEEEEVATPPPPPPPKKETKPEPMEEDLPENKKQALKEKELGNDAYKKKDFDTALKHYDKAKELDPTNMTYITNQAAVYFEKGDYNKCRELCEKAIDVGRENREDYRQIAKAYARIGNSYFKEEKYKDAIHFYNKSLAEHRTPDVLKKCQQAEKILKEQERLAYINPDLALEEKNKGNECFQKGDYPQAMKHYTEAIKRNPKDAKLYSNRAACYTKLLEFQLALKDCEECIQLEPTFIKGYTRKAAALEAMKDYTKAMDVYQKALDLDSSRKEAADGYQRCMMAQYNRHDSPEDVKRRAMADPEVQQIMSDPAMRLILEQMQKDPQALSEHLKNPVIAQKIQKLMDVGLIAIR</sequence>
<reference key="1">
    <citation type="submission" date="2005-06" db="EMBL/GenBank/DDBJ databases">
        <title>DNA sequences of macaque genes expressed in brain or testis and its evolutionary implications.</title>
        <authorList>
            <consortium name="International consortium for macaque cDNA sequencing and analysis"/>
        </authorList>
    </citation>
    <scope>NUCLEOTIDE SEQUENCE [LARGE SCALE MRNA]</scope>
    <source>
        <tissue>Testis</tissue>
    </source>
</reference>